<sequence>MTEQATNGAADEQQPQFSLQRIYLRDLSFESPKSPEIFRQEWNPSISLDLNTRQKQLDGDFYEVVLTVSVTVKNGEDTTAFIAEVQQAGIFLIKNLDPSSMSHTLGAFCPNILFPYAREALDNLVVRGSFPALMLSPVNFDALYAQEIARMQASGEIPTPSVQ</sequence>
<evidence type="ECO:0000255" key="1">
    <source>
        <dbReference type="HAMAP-Rule" id="MF_00821"/>
    </source>
</evidence>
<accession>Q02EN8</accession>
<protein>
    <recommendedName>
        <fullName evidence="1">Protein-export protein SecB</fullName>
    </recommendedName>
</protein>
<reference key="1">
    <citation type="journal article" date="2006" name="Genome Biol.">
        <title>Genomic analysis reveals that Pseudomonas aeruginosa virulence is combinatorial.</title>
        <authorList>
            <person name="Lee D.G."/>
            <person name="Urbach J.M."/>
            <person name="Wu G."/>
            <person name="Liberati N.T."/>
            <person name="Feinbaum R.L."/>
            <person name="Miyata S."/>
            <person name="Diggins L.T."/>
            <person name="He J."/>
            <person name="Saucier M."/>
            <person name="Deziel E."/>
            <person name="Friedman L."/>
            <person name="Li L."/>
            <person name="Grills G."/>
            <person name="Montgomery K."/>
            <person name="Kucherlapati R."/>
            <person name="Rahme L.G."/>
            <person name="Ausubel F.M."/>
        </authorList>
    </citation>
    <scope>NUCLEOTIDE SEQUENCE [LARGE SCALE GENOMIC DNA]</scope>
    <source>
        <strain>UCBPP-PA14</strain>
    </source>
</reference>
<comment type="function">
    <text evidence="1">One of the proteins required for the normal export of preproteins out of the cell cytoplasm. It is a molecular chaperone that binds to a subset of precursor proteins, maintaining them in a translocation-competent state. It also specifically binds to its receptor SecA.</text>
</comment>
<comment type="subunit">
    <text evidence="1">Homotetramer, a dimer of dimers. One homotetramer interacts with 1 SecA dimer.</text>
</comment>
<comment type="subcellular location">
    <subcellularLocation>
        <location evidence="1">Cytoplasm</location>
    </subcellularLocation>
</comment>
<comment type="similarity">
    <text evidence="1">Belongs to the SecB family.</text>
</comment>
<name>SECB_PSEAB</name>
<feature type="chain" id="PRO_1000062492" description="Protein-export protein SecB">
    <location>
        <begin position="1"/>
        <end position="163"/>
    </location>
</feature>
<organism>
    <name type="scientific">Pseudomonas aeruginosa (strain UCBPP-PA14)</name>
    <dbReference type="NCBI Taxonomy" id="208963"/>
    <lineage>
        <taxon>Bacteria</taxon>
        <taxon>Pseudomonadati</taxon>
        <taxon>Pseudomonadota</taxon>
        <taxon>Gammaproteobacteria</taxon>
        <taxon>Pseudomonadales</taxon>
        <taxon>Pseudomonadaceae</taxon>
        <taxon>Pseudomonas</taxon>
    </lineage>
</organism>
<keyword id="KW-0143">Chaperone</keyword>
<keyword id="KW-0963">Cytoplasm</keyword>
<keyword id="KW-0653">Protein transport</keyword>
<keyword id="KW-0811">Translocation</keyword>
<keyword id="KW-0813">Transport</keyword>
<gene>
    <name evidence="1" type="primary">secB</name>
    <name type="ordered locus">PA14_67720</name>
</gene>
<proteinExistence type="inferred from homology"/>
<dbReference type="EMBL" id="CP000438">
    <property type="protein sequence ID" value="ABJ14511.1"/>
    <property type="molecule type" value="Genomic_DNA"/>
</dbReference>
<dbReference type="RefSeq" id="WP_003096050.1">
    <property type="nucleotide sequence ID" value="NZ_CP034244.1"/>
</dbReference>
<dbReference type="SMR" id="Q02EN8"/>
<dbReference type="GeneID" id="77223656"/>
<dbReference type="KEGG" id="pau:PA14_67720"/>
<dbReference type="PseudoCAP" id="PA14_67720"/>
<dbReference type="HOGENOM" id="CLU_111574_1_0_6"/>
<dbReference type="BioCyc" id="PAER208963:G1G74-5711-MONOMER"/>
<dbReference type="Proteomes" id="UP000000653">
    <property type="component" value="Chromosome"/>
</dbReference>
<dbReference type="GO" id="GO:0005737">
    <property type="term" value="C:cytoplasm"/>
    <property type="evidence" value="ECO:0007669"/>
    <property type="project" value="UniProtKB-SubCell"/>
</dbReference>
<dbReference type="GO" id="GO:0051082">
    <property type="term" value="F:unfolded protein binding"/>
    <property type="evidence" value="ECO:0007669"/>
    <property type="project" value="InterPro"/>
</dbReference>
<dbReference type="GO" id="GO:0006457">
    <property type="term" value="P:protein folding"/>
    <property type="evidence" value="ECO:0007669"/>
    <property type="project" value="UniProtKB-UniRule"/>
</dbReference>
<dbReference type="GO" id="GO:0051262">
    <property type="term" value="P:protein tetramerization"/>
    <property type="evidence" value="ECO:0007669"/>
    <property type="project" value="InterPro"/>
</dbReference>
<dbReference type="GO" id="GO:0015031">
    <property type="term" value="P:protein transport"/>
    <property type="evidence" value="ECO:0007669"/>
    <property type="project" value="UniProtKB-UniRule"/>
</dbReference>
<dbReference type="Gene3D" id="3.10.420.10">
    <property type="entry name" value="SecB-like"/>
    <property type="match status" value="1"/>
</dbReference>
<dbReference type="HAMAP" id="MF_00821">
    <property type="entry name" value="SecB"/>
    <property type="match status" value="1"/>
</dbReference>
<dbReference type="InterPro" id="IPR003708">
    <property type="entry name" value="SecB"/>
</dbReference>
<dbReference type="InterPro" id="IPR035958">
    <property type="entry name" value="SecB-like_sf"/>
</dbReference>
<dbReference type="NCBIfam" id="NF004393">
    <property type="entry name" value="PRK05751.1-4"/>
    <property type="match status" value="1"/>
</dbReference>
<dbReference type="NCBIfam" id="TIGR00809">
    <property type="entry name" value="secB"/>
    <property type="match status" value="1"/>
</dbReference>
<dbReference type="PANTHER" id="PTHR36918">
    <property type="match status" value="1"/>
</dbReference>
<dbReference type="PANTHER" id="PTHR36918:SF1">
    <property type="entry name" value="PROTEIN-EXPORT PROTEIN SECB"/>
    <property type="match status" value="1"/>
</dbReference>
<dbReference type="Pfam" id="PF02556">
    <property type="entry name" value="SecB"/>
    <property type="match status" value="1"/>
</dbReference>
<dbReference type="PRINTS" id="PR01594">
    <property type="entry name" value="SECBCHAPRONE"/>
</dbReference>
<dbReference type="SUPFAM" id="SSF54611">
    <property type="entry name" value="SecB-like"/>
    <property type="match status" value="1"/>
</dbReference>